<dbReference type="GO" id="GO:0015934">
    <property type="term" value="C:large ribosomal subunit"/>
    <property type="evidence" value="ECO:0007669"/>
    <property type="project" value="InterPro"/>
</dbReference>
<dbReference type="GO" id="GO:0003735">
    <property type="term" value="F:structural constituent of ribosome"/>
    <property type="evidence" value="ECO:0007669"/>
    <property type="project" value="InterPro"/>
</dbReference>
<dbReference type="GO" id="GO:0006412">
    <property type="term" value="P:translation"/>
    <property type="evidence" value="ECO:0007669"/>
    <property type="project" value="InterPro"/>
</dbReference>
<dbReference type="Gene3D" id="1.20.5.640">
    <property type="entry name" value="Single helix bin"/>
    <property type="match status" value="1"/>
</dbReference>
<dbReference type="InterPro" id="IPR002677">
    <property type="entry name" value="Ribosomal_bL32"/>
</dbReference>
<dbReference type="InterPro" id="IPR011332">
    <property type="entry name" value="Ribosomal_zn-bd"/>
</dbReference>
<dbReference type="NCBIfam" id="TIGR01031">
    <property type="entry name" value="rpmF_bact"/>
    <property type="match status" value="1"/>
</dbReference>
<dbReference type="Pfam" id="PF01783">
    <property type="entry name" value="Ribosomal_L32p"/>
    <property type="match status" value="1"/>
</dbReference>
<dbReference type="SUPFAM" id="SSF57829">
    <property type="entry name" value="Zn-binding ribosomal proteins"/>
    <property type="match status" value="1"/>
</dbReference>
<feature type="chain" id="PRO_0000224009" description="Large ribosomal subunit protein bL32">
    <location>
        <begin position="1"/>
        <end position="22" status="greater than"/>
    </location>
</feature>
<feature type="region of interest" description="Disordered" evidence="1">
    <location>
        <begin position="1"/>
        <end position="22"/>
    </location>
</feature>
<feature type="non-terminal residue">
    <location>
        <position position="22"/>
    </location>
</feature>
<reference key="1">
    <citation type="journal article" date="1995" name="Int. J. Syst. Bacteriol.">
        <title>Comparative ribosomal protein sequence analyses of a phylogenetically defined genus, Pseudomonas, and its relatives.</title>
        <authorList>
            <person name="Ochi K."/>
        </authorList>
    </citation>
    <scope>PROTEIN SEQUENCE</scope>
    <source>
        <strain>ATCC 11426 / DSM 7226 / JCM 1477 / LMG 2350 / NBRC 12165 / NCIMB 1945 / NCTC 10900</strain>
    </source>
</reference>
<organism>
    <name type="scientific">Brevundimonas vesicularis</name>
    <name type="common">Pseudomonas vesicularis</name>
    <dbReference type="NCBI Taxonomy" id="41276"/>
    <lineage>
        <taxon>Bacteria</taxon>
        <taxon>Pseudomonadati</taxon>
        <taxon>Pseudomonadota</taxon>
        <taxon>Alphaproteobacteria</taxon>
        <taxon>Caulobacterales</taxon>
        <taxon>Caulobacteraceae</taxon>
        <taxon>Brevundimonas</taxon>
    </lineage>
</organism>
<proteinExistence type="evidence at protein level"/>
<protein>
    <recommendedName>
        <fullName evidence="2">Large ribosomal subunit protein bL32</fullName>
    </recommendedName>
    <alternativeName>
        <fullName>50S ribosomal protein L32</fullName>
    </alternativeName>
</protein>
<gene>
    <name type="primary">rpmF</name>
</gene>
<comment type="similarity">
    <text evidence="2">Belongs to the bacterial ribosomal protein bL32 family.</text>
</comment>
<sequence length="22" mass="2530">CVPKRKVSPSXRNMRXAHDXLT</sequence>
<evidence type="ECO:0000256" key="1">
    <source>
        <dbReference type="SAM" id="MobiDB-lite"/>
    </source>
</evidence>
<evidence type="ECO:0000305" key="2"/>
<name>RL32_BREVE</name>
<keyword id="KW-0903">Direct protein sequencing</keyword>
<keyword id="KW-0687">Ribonucleoprotein</keyword>
<keyword id="KW-0689">Ribosomal protein</keyword>
<accession>Q9R4N9</accession>